<accession>Q8YJ71</accession>
<name>RPPH_BRUME</name>
<protein>
    <recommendedName>
        <fullName evidence="1">RNA pyrophosphohydrolase</fullName>
        <ecNumber evidence="1">3.6.1.-</ecNumber>
    </recommendedName>
    <alternativeName>
        <fullName evidence="1">(Di)nucleoside polyphosphate hydrolase</fullName>
    </alternativeName>
</protein>
<gene>
    <name evidence="1" type="primary">rppH</name>
    <name evidence="1" type="synonym">nudH</name>
    <name type="ordered locus">BMEI0215</name>
</gene>
<keyword id="KW-0378">Hydrolase</keyword>
<reference key="1">
    <citation type="journal article" date="2002" name="Proc. Natl. Acad. Sci. U.S.A.">
        <title>The genome sequence of the facultative intracellular pathogen Brucella melitensis.</title>
        <authorList>
            <person name="DelVecchio V.G."/>
            <person name="Kapatral V."/>
            <person name="Redkar R.J."/>
            <person name="Patra G."/>
            <person name="Mujer C."/>
            <person name="Los T."/>
            <person name="Ivanova N."/>
            <person name="Anderson I."/>
            <person name="Bhattacharyya A."/>
            <person name="Lykidis A."/>
            <person name="Reznik G."/>
            <person name="Jablonski L."/>
            <person name="Larsen N."/>
            <person name="D'Souza M."/>
            <person name="Bernal A."/>
            <person name="Mazur M."/>
            <person name="Goltsman E."/>
            <person name="Selkov E."/>
            <person name="Elzer P.H."/>
            <person name="Hagius S."/>
            <person name="O'Callaghan D."/>
            <person name="Letesson J.-J."/>
            <person name="Haselkorn R."/>
            <person name="Kyrpides N.C."/>
            <person name="Overbeek R."/>
        </authorList>
    </citation>
    <scope>NUCLEOTIDE SEQUENCE [LARGE SCALE GENOMIC DNA]</scope>
    <source>
        <strain>ATCC 23456 / CCUG 17765 / NCTC 10094 / 16M</strain>
    </source>
</reference>
<organism>
    <name type="scientific">Brucella melitensis biotype 1 (strain ATCC 23456 / CCUG 17765 / NCTC 10094 / 16M)</name>
    <dbReference type="NCBI Taxonomy" id="224914"/>
    <lineage>
        <taxon>Bacteria</taxon>
        <taxon>Pseudomonadati</taxon>
        <taxon>Pseudomonadota</taxon>
        <taxon>Alphaproteobacteria</taxon>
        <taxon>Hyphomicrobiales</taxon>
        <taxon>Brucellaceae</taxon>
        <taxon>Brucella/Ochrobactrum group</taxon>
        <taxon>Brucella</taxon>
    </lineage>
</organism>
<evidence type="ECO:0000255" key="1">
    <source>
        <dbReference type="HAMAP-Rule" id="MF_00298"/>
    </source>
</evidence>
<sequence>MSEHKGPTGAMVDPESLPYRPCVGLMVLNKAGLVWAGRRIVIPGDEMDGATQLWQMPQGGIDKGEDPAQAALRELYEETGMTSVSLLEEASDWINYDLPPHLVGLALKGKYRGQTQKWFAYRFEGDESEIAINPPPGGHTAEFDCWEWKPMADLPNLIVPFKRKVYEQVVATFRHLAA</sequence>
<comment type="function">
    <text evidence="1">Accelerates the degradation of transcripts by removing pyrophosphate from the 5'-end of triphosphorylated RNA, leading to a more labile monophosphorylated state that can stimulate subsequent ribonuclease cleavage.</text>
</comment>
<comment type="cofactor">
    <cofactor evidence="1">
        <name>a divalent metal cation</name>
        <dbReference type="ChEBI" id="CHEBI:60240"/>
    </cofactor>
</comment>
<comment type="similarity">
    <text evidence="1">Belongs to the Nudix hydrolase family. RppH subfamily.</text>
</comment>
<proteinExistence type="inferred from homology"/>
<feature type="chain" id="PRO_0000056998" description="RNA pyrophosphohydrolase">
    <location>
        <begin position="1"/>
        <end position="178"/>
    </location>
</feature>
<feature type="domain" description="Nudix hydrolase" evidence="1">
    <location>
        <begin position="18"/>
        <end position="171"/>
    </location>
</feature>
<feature type="short sequence motif" description="Nudix box">
    <location>
        <begin position="59"/>
        <end position="80"/>
    </location>
</feature>
<dbReference type="EC" id="3.6.1.-" evidence="1"/>
<dbReference type="EMBL" id="AE008917">
    <property type="protein sequence ID" value="AAL51397.1"/>
    <property type="molecule type" value="Genomic_DNA"/>
</dbReference>
<dbReference type="PIR" id="AB3279">
    <property type="entry name" value="AB3279"/>
</dbReference>
<dbReference type="RefSeq" id="WP_004684311.1">
    <property type="nucleotide sequence ID" value="NZ_GG703781.1"/>
</dbReference>
<dbReference type="SMR" id="Q8YJ71"/>
<dbReference type="GeneID" id="29592964"/>
<dbReference type="KEGG" id="bme:BMEI0215"/>
<dbReference type="KEGG" id="bmel:DK63_1215"/>
<dbReference type="PATRIC" id="fig|224914.52.peg.1285"/>
<dbReference type="eggNOG" id="COG0494">
    <property type="taxonomic scope" value="Bacteria"/>
</dbReference>
<dbReference type="PhylomeDB" id="Q8YJ71"/>
<dbReference type="PHI-base" id="PHI:4915"/>
<dbReference type="Proteomes" id="UP000000419">
    <property type="component" value="Chromosome I"/>
</dbReference>
<dbReference type="GO" id="GO:0034432">
    <property type="term" value="F:bis(5'-adenosyl)-pentaphosphatase activity"/>
    <property type="evidence" value="ECO:0007669"/>
    <property type="project" value="TreeGrafter"/>
</dbReference>
<dbReference type="GO" id="GO:0008893">
    <property type="term" value="F:guanosine-3',5'-bis(diphosphate) 3'-diphosphatase activity"/>
    <property type="evidence" value="ECO:0007669"/>
    <property type="project" value="TreeGrafter"/>
</dbReference>
<dbReference type="GO" id="GO:0006753">
    <property type="term" value="P:nucleoside phosphate metabolic process"/>
    <property type="evidence" value="ECO:0007669"/>
    <property type="project" value="TreeGrafter"/>
</dbReference>
<dbReference type="GO" id="GO:0019693">
    <property type="term" value="P:ribose phosphate metabolic process"/>
    <property type="evidence" value="ECO:0007669"/>
    <property type="project" value="TreeGrafter"/>
</dbReference>
<dbReference type="CDD" id="cd03671">
    <property type="entry name" value="NUDIX_Ap4A_hydrolase_plant_like"/>
    <property type="match status" value="1"/>
</dbReference>
<dbReference type="Gene3D" id="3.90.79.10">
    <property type="entry name" value="Nucleoside Triphosphate Pyrophosphohydrolase"/>
    <property type="match status" value="1"/>
</dbReference>
<dbReference type="HAMAP" id="MF_00298">
    <property type="entry name" value="Nudix_RppH"/>
    <property type="match status" value="1"/>
</dbReference>
<dbReference type="InterPro" id="IPR020476">
    <property type="entry name" value="Nudix_hydrolase"/>
</dbReference>
<dbReference type="InterPro" id="IPR015797">
    <property type="entry name" value="NUDIX_hydrolase-like_dom_sf"/>
</dbReference>
<dbReference type="InterPro" id="IPR020084">
    <property type="entry name" value="NUDIX_hydrolase_CS"/>
</dbReference>
<dbReference type="InterPro" id="IPR000086">
    <property type="entry name" value="NUDIX_hydrolase_dom"/>
</dbReference>
<dbReference type="InterPro" id="IPR022927">
    <property type="entry name" value="RppH"/>
</dbReference>
<dbReference type="NCBIfam" id="NF001938">
    <property type="entry name" value="PRK00714.1-5"/>
    <property type="match status" value="1"/>
</dbReference>
<dbReference type="PANTHER" id="PTHR11839:SF22">
    <property type="entry name" value="NUDIX HYDROLASE 26, CHLOROPLASTIC"/>
    <property type="match status" value="1"/>
</dbReference>
<dbReference type="PANTHER" id="PTHR11839">
    <property type="entry name" value="UDP/ADP-SUGAR PYROPHOSPHATASE"/>
    <property type="match status" value="1"/>
</dbReference>
<dbReference type="Pfam" id="PF00293">
    <property type="entry name" value="NUDIX"/>
    <property type="match status" value="1"/>
</dbReference>
<dbReference type="PRINTS" id="PR00502">
    <property type="entry name" value="NUDIXFAMILY"/>
</dbReference>
<dbReference type="SUPFAM" id="SSF55811">
    <property type="entry name" value="Nudix"/>
    <property type="match status" value="1"/>
</dbReference>
<dbReference type="PROSITE" id="PS51462">
    <property type="entry name" value="NUDIX"/>
    <property type="match status" value="1"/>
</dbReference>
<dbReference type="PROSITE" id="PS00893">
    <property type="entry name" value="NUDIX_BOX"/>
    <property type="match status" value="1"/>
</dbReference>